<comment type="subcellular location">
    <subcellularLocation>
        <location evidence="3">Membrane</location>
        <topology evidence="3">Multi-pass membrane protein</topology>
    </subcellularLocation>
</comment>
<comment type="similarity">
    <text evidence="3">Belongs to the PER33/POM33 family.</text>
</comment>
<name>TMM33_DICDI</name>
<keyword id="KW-0472">Membrane</keyword>
<keyword id="KW-1185">Reference proteome</keyword>
<keyword id="KW-0812">Transmembrane</keyword>
<keyword id="KW-1133">Transmembrane helix</keyword>
<protein>
    <recommendedName>
        <fullName>Transmembrane protein 33 homolog</fullName>
    </recommendedName>
</protein>
<gene>
    <name type="primary">tmem33</name>
    <name type="ORF">DDB_G0286009</name>
</gene>
<accession>Q54ME7</accession>
<evidence type="ECO:0000255" key="1"/>
<evidence type="ECO:0000256" key="2">
    <source>
        <dbReference type="SAM" id="MobiDB-lite"/>
    </source>
</evidence>
<evidence type="ECO:0000305" key="3"/>
<proteinExistence type="inferred from homology"/>
<sequence>MSSPKFDSYDWENDPNWKEFTGTSTSINKLKEEYFKKNIDPNYKSSNNTTTQRPSTSSSSRTSSSSTSSPRATRAKPTFRRFLYGAWVIAQISVILFTLFYFISGNPYFFYKALLGATIAYSIPIFNTFEGRKPDRALAAQLVQDENAQFVFYCMIFYFFGSSSLVYLLPNFIYSFFHMLKIVIPYTSSVPFIKNLLEKVNSTNAKAIDFAISVEINIVLIAFFGIFSSFSNILLVFIYFRYLKLRYQFSQKIKSKINEYSQMVDQLSAHPSCPTFIRNIIPKIKMVLSR</sequence>
<feature type="chain" id="PRO_0000345004" description="Transmembrane protein 33 homolog">
    <location>
        <begin position="1"/>
        <end position="290"/>
    </location>
</feature>
<feature type="transmembrane region" description="Helical" evidence="1">
    <location>
        <begin position="83"/>
        <end position="103"/>
    </location>
</feature>
<feature type="transmembrane region" description="Helical" evidence="1">
    <location>
        <begin position="109"/>
        <end position="129"/>
    </location>
</feature>
<feature type="transmembrane region" description="Helical" evidence="1">
    <location>
        <begin position="150"/>
        <end position="170"/>
    </location>
</feature>
<feature type="transmembrane region" description="Helical" evidence="1">
    <location>
        <begin position="218"/>
        <end position="238"/>
    </location>
</feature>
<feature type="region of interest" description="Disordered" evidence="2">
    <location>
        <begin position="1"/>
        <end position="22"/>
    </location>
</feature>
<feature type="region of interest" description="Disordered" evidence="2">
    <location>
        <begin position="39"/>
        <end position="72"/>
    </location>
</feature>
<feature type="compositionally biased region" description="Low complexity" evidence="2">
    <location>
        <begin position="45"/>
        <end position="72"/>
    </location>
</feature>
<reference key="1">
    <citation type="journal article" date="2005" name="Nature">
        <title>The genome of the social amoeba Dictyostelium discoideum.</title>
        <authorList>
            <person name="Eichinger L."/>
            <person name="Pachebat J.A."/>
            <person name="Gloeckner G."/>
            <person name="Rajandream M.A."/>
            <person name="Sucgang R."/>
            <person name="Berriman M."/>
            <person name="Song J."/>
            <person name="Olsen R."/>
            <person name="Szafranski K."/>
            <person name="Xu Q."/>
            <person name="Tunggal B."/>
            <person name="Kummerfeld S."/>
            <person name="Madera M."/>
            <person name="Konfortov B.A."/>
            <person name="Rivero F."/>
            <person name="Bankier A.T."/>
            <person name="Lehmann R."/>
            <person name="Hamlin N."/>
            <person name="Davies R."/>
            <person name="Gaudet P."/>
            <person name="Fey P."/>
            <person name="Pilcher K."/>
            <person name="Chen G."/>
            <person name="Saunders D."/>
            <person name="Sodergren E.J."/>
            <person name="Davis P."/>
            <person name="Kerhornou A."/>
            <person name="Nie X."/>
            <person name="Hall N."/>
            <person name="Anjard C."/>
            <person name="Hemphill L."/>
            <person name="Bason N."/>
            <person name="Farbrother P."/>
            <person name="Desany B."/>
            <person name="Just E."/>
            <person name="Morio T."/>
            <person name="Rost R."/>
            <person name="Churcher C.M."/>
            <person name="Cooper J."/>
            <person name="Haydock S."/>
            <person name="van Driessche N."/>
            <person name="Cronin A."/>
            <person name="Goodhead I."/>
            <person name="Muzny D.M."/>
            <person name="Mourier T."/>
            <person name="Pain A."/>
            <person name="Lu M."/>
            <person name="Harper D."/>
            <person name="Lindsay R."/>
            <person name="Hauser H."/>
            <person name="James K.D."/>
            <person name="Quiles M."/>
            <person name="Madan Babu M."/>
            <person name="Saito T."/>
            <person name="Buchrieser C."/>
            <person name="Wardroper A."/>
            <person name="Felder M."/>
            <person name="Thangavelu M."/>
            <person name="Johnson D."/>
            <person name="Knights A."/>
            <person name="Loulseged H."/>
            <person name="Mungall K.L."/>
            <person name="Oliver K."/>
            <person name="Price C."/>
            <person name="Quail M.A."/>
            <person name="Urushihara H."/>
            <person name="Hernandez J."/>
            <person name="Rabbinowitsch E."/>
            <person name="Steffen D."/>
            <person name="Sanders M."/>
            <person name="Ma J."/>
            <person name="Kohara Y."/>
            <person name="Sharp S."/>
            <person name="Simmonds M.N."/>
            <person name="Spiegler S."/>
            <person name="Tivey A."/>
            <person name="Sugano S."/>
            <person name="White B."/>
            <person name="Walker D."/>
            <person name="Woodward J.R."/>
            <person name="Winckler T."/>
            <person name="Tanaka Y."/>
            <person name="Shaulsky G."/>
            <person name="Schleicher M."/>
            <person name="Weinstock G.M."/>
            <person name="Rosenthal A."/>
            <person name="Cox E.C."/>
            <person name="Chisholm R.L."/>
            <person name="Gibbs R.A."/>
            <person name="Loomis W.F."/>
            <person name="Platzer M."/>
            <person name="Kay R.R."/>
            <person name="Williams J.G."/>
            <person name="Dear P.H."/>
            <person name="Noegel A.A."/>
            <person name="Barrell B.G."/>
            <person name="Kuspa A."/>
        </authorList>
    </citation>
    <scope>NUCLEOTIDE SEQUENCE [LARGE SCALE GENOMIC DNA]</scope>
    <source>
        <strain>AX4</strain>
    </source>
</reference>
<organism>
    <name type="scientific">Dictyostelium discoideum</name>
    <name type="common">Social amoeba</name>
    <dbReference type="NCBI Taxonomy" id="44689"/>
    <lineage>
        <taxon>Eukaryota</taxon>
        <taxon>Amoebozoa</taxon>
        <taxon>Evosea</taxon>
        <taxon>Eumycetozoa</taxon>
        <taxon>Dictyostelia</taxon>
        <taxon>Dictyosteliales</taxon>
        <taxon>Dictyosteliaceae</taxon>
        <taxon>Dictyostelium</taxon>
    </lineage>
</organism>
<dbReference type="EMBL" id="AAFI02000084">
    <property type="protein sequence ID" value="EAL64438.1"/>
    <property type="molecule type" value="Genomic_DNA"/>
</dbReference>
<dbReference type="RefSeq" id="XP_637942.1">
    <property type="nucleotide sequence ID" value="XM_632850.1"/>
</dbReference>
<dbReference type="FunCoup" id="Q54ME7">
    <property type="interactions" value="233"/>
</dbReference>
<dbReference type="STRING" id="44689.Q54ME7"/>
<dbReference type="TCDB" id="1.I.1.1.5">
    <property type="family name" value="the nuclear pore complex (npc) family"/>
</dbReference>
<dbReference type="PaxDb" id="44689-DDB0266865"/>
<dbReference type="EnsemblProtists" id="EAL64438">
    <property type="protein sequence ID" value="EAL64438"/>
    <property type="gene ID" value="DDB_G0286009"/>
</dbReference>
<dbReference type="GeneID" id="8625395"/>
<dbReference type="KEGG" id="ddi:DDB_G0286009"/>
<dbReference type="dictyBase" id="DDB_G0286009">
    <property type="gene designation" value="tmem33"/>
</dbReference>
<dbReference type="VEuPathDB" id="AmoebaDB:DDB_G0286009"/>
<dbReference type="eggNOG" id="KOG4002">
    <property type="taxonomic scope" value="Eukaryota"/>
</dbReference>
<dbReference type="HOGENOM" id="CLU_961163_0_0_1"/>
<dbReference type="InParanoid" id="Q54ME7"/>
<dbReference type="OMA" id="WSKIGRT"/>
<dbReference type="PhylomeDB" id="Q54ME7"/>
<dbReference type="PRO" id="PR:Q54ME7"/>
<dbReference type="Proteomes" id="UP000002195">
    <property type="component" value="Chromosome 4"/>
</dbReference>
<dbReference type="GO" id="GO:0005783">
    <property type="term" value="C:endoplasmic reticulum"/>
    <property type="evidence" value="ECO:0000318"/>
    <property type="project" value="GO_Central"/>
</dbReference>
<dbReference type="GO" id="GO:0016020">
    <property type="term" value="C:membrane"/>
    <property type="evidence" value="ECO:0007669"/>
    <property type="project" value="UniProtKB-SubCell"/>
</dbReference>
<dbReference type="GO" id="GO:0071786">
    <property type="term" value="P:endoplasmic reticulum tubular network organization"/>
    <property type="evidence" value="ECO:0000318"/>
    <property type="project" value="GO_Central"/>
</dbReference>
<dbReference type="GO" id="GO:0061024">
    <property type="term" value="P:membrane organization"/>
    <property type="evidence" value="ECO:0000318"/>
    <property type="project" value="GO_Central"/>
</dbReference>
<dbReference type="InterPro" id="IPR051645">
    <property type="entry name" value="PER33/POM33_regulator"/>
</dbReference>
<dbReference type="InterPro" id="IPR005344">
    <property type="entry name" value="TMEM33/Pom33"/>
</dbReference>
<dbReference type="PANTHER" id="PTHR12703">
    <property type="entry name" value="TRANSMEMBRANE PROTEIN 33"/>
    <property type="match status" value="1"/>
</dbReference>
<dbReference type="PANTHER" id="PTHR12703:SF4">
    <property type="entry name" value="TRANSMEMBRANE PROTEIN 33"/>
    <property type="match status" value="1"/>
</dbReference>
<dbReference type="Pfam" id="PF03661">
    <property type="entry name" value="TMEM33_Pom33"/>
    <property type="match status" value="1"/>
</dbReference>